<dbReference type="EC" id="6.1.1.16" evidence="1"/>
<dbReference type="EMBL" id="CP001392">
    <property type="protein sequence ID" value="ACM33546.1"/>
    <property type="molecule type" value="Genomic_DNA"/>
</dbReference>
<dbReference type="RefSeq" id="WP_015913570.1">
    <property type="nucleotide sequence ID" value="NC_011992.1"/>
</dbReference>
<dbReference type="SMR" id="B9MAU5"/>
<dbReference type="KEGG" id="dia:Dtpsy_2091"/>
<dbReference type="eggNOG" id="COG0215">
    <property type="taxonomic scope" value="Bacteria"/>
</dbReference>
<dbReference type="HOGENOM" id="CLU_013528_0_1_4"/>
<dbReference type="Proteomes" id="UP000000450">
    <property type="component" value="Chromosome"/>
</dbReference>
<dbReference type="GO" id="GO:0005829">
    <property type="term" value="C:cytosol"/>
    <property type="evidence" value="ECO:0007669"/>
    <property type="project" value="TreeGrafter"/>
</dbReference>
<dbReference type="GO" id="GO:0005524">
    <property type="term" value="F:ATP binding"/>
    <property type="evidence" value="ECO:0007669"/>
    <property type="project" value="UniProtKB-UniRule"/>
</dbReference>
<dbReference type="GO" id="GO:0004817">
    <property type="term" value="F:cysteine-tRNA ligase activity"/>
    <property type="evidence" value="ECO:0007669"/>
    <property type="project" value="UniProtKB-UniRule"/>
</dbReference>
<dbReference type="GO" id="GO:0008270">
    <property type="term" value="F:zinc ion binding"/>
    <property type="evidence" value="ECO:0007669"/>
    <property type="project" value="UniProtKB-UniRule"/>
</dbReference>
<dbReference type="GO" id="GO:0006423">
    <property type="term" value="P:cysteinyl-tRNA aminoacylation"/>
    <property type="evidence" value="ECO:0007669"/>
    <property type="project" value="UniProtKB-UniRule"/>
</dbReference>
<dbReference type="CDD" id="cd07963">
    <property type="entry name" value="Anticodon_Ia_Cys"/>
    <property type="match status" value="1"/>
</dbReference>
<dbReference type="CDD" id="cd00672">
    <property type="entry name" value="CysRS_core"/>
    <property type="match status" value="1"/>
</dbReference>
<dbReference type="FunFam" id="3.40.50.620:FF:000009">
    <property type="entry name" value="Cysteine--tRNA ligase"/>
    <property type="match status" value="1"/>
</dbReference>
<dbReference type="Gene3D" id="1.20.120.1910">
    <property type="entry name" value="Cysteine-tRNA ligase, C-terminal anti-codon recognition domain"/>
    <property type="match status" value="1"/>
</dbReference>
<dbReference type="Gene3D" id="3.40.50.620">
    <property type="entry name" value="HUPs"/>
    <property type="match status" value="1"/>
</dbReference>
<dbReference type="HAMAP" id="MF_00041">
    <property type="entry name" value="Cys_tRNA_synth"/>
    <property type="match status" value="1"/>
</dbReference>
<dbReference type="InterPro" id="IPR015803">
    <property type="entry name" value="Cys-tRNA-ligase"/>
</dbReference>
<dbReference type="InterPro" id="IPR015273">
    <property type="entry name" value="Cys-tRNA-synt_Ia_DALR"/>
</dbReference>
<dbReference type="InterPro" id="IPR024909">
    <property type="entry name" value="Cys-tRNA/MSH_ligase"/>
</dbReference>
<dbReference type="InterPro" id="IPR056411">
    <property type="entry name" value="CysS_C"/>
</dbReference>
<dbReference type="InterPro" id="IPR014729">
    <property type="entry name" value="Rossmann-like_a/b/a_fold"/>
</dbReference>
<dbReference type="InterPro" id="IPR032678">
    <property type="entry name" value="tRNA-synt_1_cat_dom"/>
</dbReference>
<dbReference type="InterPro" id="IPR009080">
    <property type="entry name" value="tRNAsynth_Ia_anticodon-bd"/>
</dbReference>
<dbReference type="NCBIfam" id="TIGR00435">
    <property type="entry name" value="cysS"/>
    <property type="match status" value="1"/>
</dbReference>
<dbReference type="PANTHER" id="PTHR10890:SF3">
    <property type="entry name" value="CYSTEINE--TRNA LIGASE, CYTOPLASMIC"/>
    <property type="match status" value="1"/>
</dbReference>
<dbReference type="PANTHER" id="PTHR10890">
    <property type="entry name" value="CYSTEINYL-TRNA SYNTHETASE"/>
    <property type="match status" value="1"/>
</dbReference>
<dbReference type="Pfam" id="PF23493">
    <property type="entry name" value="CysS_C"/>
    <property type="match status" value="1"/>
</dbReference>
<dbReference type="Pfam" id="PF09190">
    <property type="entry name" value="DALR_2"/>
    <property type="match status" value="1"/>
</dbReference>
<dbReference type="Pfam" id="PF01406">
    <property type="entry name" value="tRNA-synt_1e"/>
    <property type="match status" value="1"/>
</dbReference>
<dbReference type="PRINTS" id="PR00983">
    <property type="entry name" value="TRNASYNTHCYS"/>
</dbReference>
<dbReference type="SMART" id="SM00840">
    <property type="entry name" value="DALR_2"/>
    <property type="match status" value="1"/>
</dbReference>
<dbReference type="SUPFAM" id="SSF47323">
    <property type="entry name" value="Anticodon-binding domain of a subclass of class I aminoacyl-tRNA synthetases"/>
    <property type="match status" value="1"/>
</dbReference>
<dbReference type="SUPFAM" id="SSF52374">
    <property type="entry name" value="Nucleotidylyl transferase"/>
    <property type="match status" value="1"/>
</dbReference>
<proteinExistence type="inferred from homology"/>
<organism>
    <name type="scientific">Acidovorax ebreus (strain TPSY)</name>
    <name type="common">Diaphorobacter sp. (strain TPSY)</name>
    <dbReference type="NCBI Taxonomy" id="535289"/>
    <lineage>
        <taxon>Bacteria</taxon>
        <taxon>Pseudomonadati</taxon>
        <taxon>Pseudomonadota</taxon>
        <taxon>Betaproteobacteria</taxon>
        <taxon>Burkholderiales</taxon>
        <taxon>Comamonadaceae</taxon>
        <taxon>Diaphorobacter</taxon>
    </lineage>
</organism>
<evidence type="ECO:0000255" key="1">
    <source>
        <dbReference type="HAMAP-Rule" id="MF_00041"/>
    </source>
</evidence>
<feature type="chain" id="PRO_1000199059" description="Cysteine--tRNA ligase">
    <location>
        <begin position="1"/>
        <end position="458"/>
    </location>
</feature>
<feature type="short sequence motif" description="'HIGH' region">
    <location>
        <begin position="31"/>
        <end position="41"/>
    </location>
</feature>
<feature type="short sequence motif" description="'KMSKS' region">
    <location>
        <begin position="270"/>
        <end position="274"/>
    </location>
</feature>
<feature type="binding site" evidence="1">
    <location>
        <position position="29"/>
    </location>
    <ligand>
        <name>Zn(2+)</name>
        <dbReference type="ChEBI" id="CHEBI:29105"/>
    </ligand>
</feature>
<feature type="binding site" evidence="1">
    <location>
        <position position="213"/>
    </location>
    <ligand>
        <name>Zn(2+)</name>
        <dbReference type="ChEBI" id="CHEBI:29105"/>
    </ligand>
</feature>
<feature type="binding site" evidence="1">
    <location>
        <position position="238"/>
    </location>
    <ligand>
        <name>Zn(2+)</name>
        <dbReference type="ChEBI" id="CHEBI:29105"/>
    </ligand>
</feature>
<feature type="binding site" evidence="1">
    <location>
        <position position="242"/>
    </location>
    <ligand>
        <name>Zn(2+)</name>
        <dbReference type="ChEBI" id="CHEBI:29105"/>
    </ligand>
</feature>
<feature type="binding site" evidence="1">
    <location>
        <position position="273"/>
    </location>
    <ligand>
        <name>ATP</name>
        <dbReference type="ChEBI" id="CHEBI:30616"/>
    </ligand>
</feature>
<reference key="1">
    <citation type="submission" date="2009-01" db="EMBL/GenBank/DDBJ databases">
        <title>Complete sequence of Diaphorobacter sp. TPSY.</title>
        <authorList>
            <consortium name="US DOE Joint Genome Institute"/>
            <person name="Lucas S."/>
            <person name="Copeland A."/>
            <person name="Lapidus A."/>
            <person name="Glavina del Rio T."/>
            <person name="Tice H."/>
            <person name="Bruce D."/>
            <person name="Goodwin L."/>
            <person name="Pitluck S."/>
            <person name="Chertkov O."/>
            <person name="Brettin T."/>
            <person name="Detter J.C."/>
            <person name="Han C."/>
            <person name="Larimer F."/>
            <person name="Land M."/>
            <person name="Hauser L."/>
            <person name="Kyrpides N."/>
            <person name="Mikhailova N."/>
            <person name="Coates J.D."/>
        </authorList>
    </citation>
    <scope>NUCLEOTIDE SEQUENCE [LARGE SCALE GENOMIC DNA]</scope>
    <source>
        <strain>TPSY</strain>
    </source>
</reference>
<gene>
    <name evidence="1" type="primary">cysS</name>
    <name type="ordered locus">Dtpsy_2091</name>
</gene>
<sequence>MSLRIYNTLSRALEEFSPIEPGHVRMYVCGMTVYDLCHLGHARSMIAFDVVQRWLRASGLAVTYVRNITDIDDKIIKRAVENGETIRSLTDRMIDALHQDADALGIERPTHEPRATAYVPQMLDMIGTLQGKGLAYQAGNGDVNYAVRKFPGYGKLSGKSLDELNAGERVAVQDGKHDPLDFVLWKSAKPEEPADVKWRSPFGEGRPGWHIECSAMGCALLGESFDIHGGGADLQFPHHENEIAQSEGATGKPFARLWMHNGFINVDNEKMSKSLGNFFTIRDVLKEYDAETVRFFVVRSHYRSPLNYSNVHLDDARAALKRLYTALSLVAPAPVEVDWAEGYAARFKAAMDEDFGTPEAVAVLFDLAGEVNRSKSPAAAGLLKALGRHLGLLQADPQDFLKAGAGLDEAAIQAQIAARAAAKAAKNFAEADRIRNDLLAQGIVLKDSATGTTWEAAQ</sequence>
<name>SYC_ACIET</name>
<keyword id="KW-0030">Aminoacyl-tRNA synthetase</keyword>
<keyword id="KW-0067">ATP-binding</keyword>
<keyword id="KW-0963">Cytoplasm</keyword>
<keyword id="KW-0436">Ligase</keyword>
<keyword id="KW-0479">Metal-binding</keyword>
<keyword id="KW-0547">Nucleotide-binding</keyword>
<keyword id="KW-0648">Protein biosynthesis</keyword>
<keyword id="KW-1185">Reference proteome</keyword>
<keyword id="KW-0862">Zinc</keyword>
<accession>B9MAU5</accession>
<comment type="catalytic activity">
    <reaction evidence="1">
        <text>tRNA(Cys) + L-cysteine + ATP = L-cysteinyl-tRNA(Cys) + AMP + diphosphate</text>
        <dbReference type="Rhea" id="RHEA:17773"/>
        <dbReference type="Rhea" id="RHEA-COMP:9661"/>
        <dbReference type="Rhea" id="RHEA-COMP:9679"/>
        <dbReference type="ChEBI" id="CHEBI:30616"/>
        <dbReference type="ChEBI" id="CHEBI:33019"/>
        <dbReference type="ChEBI" id="CHEBI:35235"/>
        <dbReference type="ChEBI" id="CHEBI:78442"/>
        <dbReference type="ChEBI" id="CHEBI:78517"/>
        <dbReference type="ChEBI" id="CHEBI:456215"/>
        <dbReference type="EC" id="6.1.1.16"/>
    </reaction>
</comment>
<comment type="cofactor">
    <cofactor evidence="1">
        <name>Zn(2+)</name>
        <dbReference type="ChEBI" id="CHEBI:29105"/>
    </cofactor>
    <text evidence="1">Binds 1 zinc ion per subunit.</text>
</comment>
<comment type="subunit">
    <text evidence="1">Monomer.</text>
</comment>
<comment type="subcellular location">
    <subcellularLocation>
        <location evidence="1">Cytoplasm</location>
    </subcellularLocation>
</comment>
<comment type="similarity">
    <text evidence="1">Belongs to the class-I aminoacyl-tRNA synthetase family.</text>
</comment>
<protein>
    <recommendedName>
        <fullName evidence="1">Cysteine--tRNA ligase</fullName>
        <ecNumber evidence="1">6.1.1.16</ecNumber>
    </recommendedName>
    <alternativeName>
        <fullName evidence="1">Cysteinyl-tRNA synthetase</fullName>
        <shortName evidence="1">CysRS</shortName>
    </alternativeName>
</protein>